<name>MOAC_SALA4</name>
<organism>
    <name type="scientific">Salmonella agona (strain SL483)</name>
    <dbReference type="NCBI Taxonomy" id="454166"/>
    <lineage>
        <taxon>Bacteria</taxon>
        <taxon>Pseudomonadati</taxon>
        <taxon>Pseudomonadota</taxon>
        <taxon>Gammaproteobacteria</taxon>
        <taxon>Enterobacterales</taxon>
        <taxon>Enterobacteriaceae</taxon>
        <taxon>Salmonella</taxon>
    </lineage>
</organism>
<comment type="function">
    <text evidence="1">Catalyzes the conversion of (8S)-3',8-cyclo-7,8-dihydroguanosine 5'-triphosphate to cyclic pyranopterin monophosphate (cPMP).</text>
</comment>
<comment type="catalytic activity">
    <reaction evidence="1">
        <text>(8S)-3',8-cyclo-7,8-dihydroguanosine 5'-triphosphate = cyclic pyranopterin phosphate + diphosphate</text>
        <dbReference type="Rhea" id="RHEA:49580"/>
        <dbReference type="ChEBI" id="CHEBI:33019"/>
        <dbReference type="ChEBI" id="CHEBI:59648"/>
        <dbReference type="ChEBI" id="CHEBI:131766"/>
        <dbReference type="EC" id="4.6.1.17"/>
    </reaction>
</comment>
<comment type="pathway">
    <text evidence="1">Cofactor biosynthesis; molybdopterin biosynthesis.</text>
</comment>
<comment type="subunit">
    <text evidence="1">Homohexamer; trimer of dimers.</text>
</comment>
<comment type="similarity">
    <text evidence="1">Belongs to the MoaC family.</text>
</comment>
<protein>
    <recommendedName>
        <fullName evidence="1">Cyclic pyranopterin monophosphate synthase</fullName>
        <ecNumber evidence="1">4.6.1.17</ecNumber>
    </recommendedName>
    <alternativeName>
        <fullName evidence="1">Molybdenum cofactor biosynthesis protein C</fullName>
    </alternativeName>
</protein>
<keyword id="KW-0456">Lyase</keyword>
<keyword id="KW-0501">Molybdenum cofactor biosynthesis</keyword>
<accession>B5F081</accession>
<evidence type="ECO:0000255" key="1">
    <source>
        <dbReference type="HAMAP-Rule" id="MF_01224"/>
    </source>
</evidence>
<sequence length="161" mass="17443">MSQLTHINAAGEAHMVDVSAKAETVREARAEAFVTMRSETLAMIVDGKHHKGDVFATARIAGIQAAKRTWELIPLCHPLLLSKVEIQLQAEPEHNRVRIESLCRLTGKTGVEMEALTAASVAALTIYDMCKAVQKDMVIGPVRLLAKSGGKSGDFKVDAHD</sequence>
<reference key="1">
    <citation type="journal article" date="2011" name="J. Bacteriol.">
        <title>Comparative genomics of 28 Salmonella enterica isolates: evidence for CRISPR-mediated adaptive sublineage evolution.</title>
        <authorList>
            <person name="Fricke W.F."/>
            <person name="Mammel M.K."/>
            <person name="McDermott P.F."/>
            <person name="Tartera C."/>
            <person name="White D.G."/>
            <person name="Leclerc J.E."/>
            <person name="Ravel J."/>
            <person name="Cebula T.A."/>
        </authorList>
    </citation>
    <scope>NUCLEOTIDE SEQUENCE [LARGE SCALE GENOMIC DNA]</scope>
    <source>
        <strain>SL483</strain>
    </source>
</reference>
<dbReference type="EC" id="4.6.1.17" evidence="1"/>
<dbReference type="EMBL" id="CP001138">
    <property type="protein sequence ID" value="ACH52652.1"/>
    <property type="molecule type" value="Genomic_DNA"/>
</dbReference>
<dbReference type="RefSeq" id="WP_000080894.1">
    <property type="nucleotide sequence ID" value="NC_011149.1"/>
</dbReference>
<dbReference type="SMR" id="B5F081"/>
<dbReference type="KEGG" id="sea:SeAg_B0839"/>
<dbReference type="HOGENOM" id="CLU_074693_1_1_6"/>
<dbReference type="UniPathway" id="UPA00344"/>
<dbReference type="Proteomes" id="UP000008819">
    <property type="component" value="Chromosome"/>
</dbReference>
<dbReference type="GO" id="GO:0061799">
    <property type="term" value="F:cyclic pyranopterin monophosphate synthase activity"/>
    <property type="evidence" value="ECO:0007669"/>
    <property type="project" value="UniProtKB-UniRule"/>
</dbReference>
<dbReference type="GO" id="GO:0006777">
    <property type="term" value="P:Mo-molybdopterin cofactor biosynthetic process"/>
    <property type="evidence" value="ECO:0007669"/>
    <property type="project" value="UniProtKB-UniRule"/>
</dbReference>
<dbReference type="CDD" id="cd01420">
    <property type="entry name" value="MoaC_PE"/>
    <property type="match status" value="1"/>
</dbReference>
<dbReference type="FunFam" id="3.30.70.640:FF:000001">
    <property type="entry name" value="Cyclic pyranopterin monophosphate synthase"/>
    <property type="match status" value="1"/>
</dbReference>
<dbReference type="Gene3D" id="3.30.70.640">
    <property type="entry name" value="Molybdopterin cofactor biosynthesis C (MoaC) domain"/>
    <property type="match status" value="1"/>
</dbReference>
<dbReference type="HAMAP" id="MF_01224_B">
    <property type="entry name" value="MoaC_B"/>
    <property type="match status" value="1"/>
</dbReference>
<dbReference type="InterPro" id="IPR023045">
    <property type="entry name" value="MoaC"/>
</dbReference>
<dbReference type="InterPro" id="IPR047594">
    <property type="entry name" value="MoaC_bact/euk"/>
</dbReference>
<dbReference type="InterPro" id="IPR036522">
    <property type="entry name" value="MoaC_sf"/>
</dbReference>
<dbReference type="InterPro" id="IPR050105">
    <property type="entry name" value="MoCo_biosynth_MoaA/MoaC"/>
</dbReference>
<dbReference type="InterPro" id="IPR002820">
    <property type="entry name" value="Mopterin_CF_biosynth-C_dom"/>
</dbReference>
<dbReference type="NCBIfam" id="TIGR00581">
    <property type="entry name" value="moaC"/>
    <property type="match status" value="1"/>
</dbReference>
<dbReference type="NCBIfam" id="NF006870">
    <property type="entry name" value="PRK09364.1"/>
    <property type="match status" value="1"/>
</dbReference>
<dbReference type="PANTHER" id="PTHR22960">
    <property type="entry name" value="MOLYBDOPTERIN COFACTOR SYNTHESIS PROTEIN A"/>
    <property type="match status" value="1"/>
</dbReference>
<dbReference type="Pfam" id="PF01967">
    <property type="entry name" value="MoaC"/>
    <property type="match status" value="1"/>
</dbReference>
<dbReference type="SUPFAM" id="SSF55040">
    <property type="entry name" value="Molybdenum cofactor biosynthesis protein C, MoaC"/>
    <property type="match status" value="1"/>
</dbReference>
<feature type="chain" id="PRO_1000139289" description="Cyclic pyranopterin monophosphate synthase">
    <location>
        <begin position="1"/>
        <end position="161"/>
    </location>
</feature>
<feature type="active site" evidence="1">
    <location>
        <position position="128"/>
    </location>
</feature>
<feature type="binding site" evidence="1">
    <location>
        <begin position="75"/>
        <end position="77"/>
    </location>
    <ligand>
        <name>substrate</name>
    </ligand>
</feature>
<feature type="binding site" evidence="1">
    <location>
        <begin position="113"/>
        <end position="114"/>
    </location>
    <ligand>
        <name>substrate</name>
    </ligand>
</feature>
<gene>
    <name evidence="1" type="primary">moaC</name>
    <name type="ordered locus">SeAg_B0839</name>
</gene>
<proteinExistence type="inferred from homology"/>